<comment type="function">
    <molecule>Junctophilin-2</molecule>
    <text evidence="5 6 7">Membrane-binding protein that provides a structural bridge between the plasma membrane and the sarcoplasmic reticulum and is required for normal excitation-contraction coupling in cardiomyocytes (PubMed:10949023, PubMed:19095005, PubMed:21339484). Provides a structural foundation for functional cross-talk between the cell surface and intracellular Ca(2+) release channels by maintaining the 12-15 nm gap between the sarcolemma and the sarcoplasmic reticulum membranes in the cardiac dyads (PubMed:10949023, PubMed:19095005, PubMed:21339484). Necessary for proper intracellular Ca(2+) signaling in cardiac myocytes via its involvement in ryanodine receptor-mediated calcium ion release (PubMed:10949023, PubMed:19095005, PubMed:21339484). Contributes to the construction of skeletal muscle triad junctions (PubMed:10949023).</text>
</comment>
<comment type="function">
    <molecule>Junctophilin-2 N-terminal fragment</molecule>
    <text evidence="10">Transcription repressor required to safeguard against the deleterious effects of cardiac stress (PubMed:30409805). Generated following cleavage of the Junctophilin-2 chain by calpain in response to cardiac stress in cardiomyocytes (PubMed:30409805). Following cleavage and release from the membrane, translocates to the nucleus, binds DNA and represses expression of genes implicated in cell growth and differentiation, hypertrophy, inflammation and fibrosis (PubMed:30409805). Modifies the transcription profile and thereby attenuates pathological remodeling in response to cardiac stress (PubMed:30409805). Probably acts by competing with MEF2 transcription factors and TATA-binding proteins (PubMed:30409805).</text>
</comment>
<comment type="subunit">
    <text evidence="2">Interacts with TRPC3 (By similarity). Interacts with BAG5 and HSPA8; the interaction with HSPA8 is increased in the presence of BAG5 (By similarity).</text>
</comment>
<comment type="subunit">
    <molecule>Junctophilin-2 N-terminal fragment</molecule>
    <text evidence="10">Interacts with MEF2C (PubMed:30409805).</text>
</comment>
<comment type="interaction">
    <interactant intactId="EBI-8350389">
        <id>Q9ET78</id>
    </interactant>
    <interactant intactId="EBI-10055313">
        <id>G1U2U3</id>
        <label>TRPC3</label>
    </interactant>
    <organismsDiffer>true</organismsDiffer>
    <experiments>4</experiments>
</comment>
<comment type="subcellular location">
    <molecule>Junctophilin-2</molecule>
    <subcellularLocation>
        <location evidence="5">Cell membrane</location>
        <topology evidence="5">Peripheral membrane protein</topology>
    </subcellularLocation>
    <subcellularLocation>
        <location evidence="5">Sarcoplasmic reticulum membrane</location>
        <topology evidence="5">Single-pass type IV membrane protein</topology>
    </subcellularLocation>
    <subcellularLocation>
        <location evidence="5">Endoplasmic reticulum membrane</location>
        <topology evidence="5">Single-pass type IV membrane protein</topology>
    </subcellularLocation>
    <text evidence="5">The transmembrane domain is anchored in sarcoplasmic reticulum membrane, while the N-terminal part associates with the plasma membrane (PubMed:10949023). In heart cells, it predominantly associates along Z lines within myocytes (PubMed:10949023). In skeletal muscle, it is specifically localized at the junction of A and I bands (PubMed:10949023).</text>
</comment>
<comment type="subcellular location">
    <molecule>Junctophilin-2 N-terminal fragment</molecule>
    <subcellularLocation>
        <location evidence="10">Nucleus</location>
    </subcellularLocation>
    <text evidence="10">Accumulates in the nucleus of stressed hearts.</text>
</comment>
<comment type="tissue specificity">
    <text evidence="5">Abundantly expressed in skeletal muscle and heart (PubMed:10949023). Weak expression in stomach and lung (PubMed:10949023).</text>
</comment>
<comment type="developmental stage">
    <text evidence="5">At 9.5 dpc, it is expressed in the periphery of cardiac myocytes in the looped cardiac tube of the developing heart (PubMed:10949023). In skeletal muscle, expression increases during muscle maturation (PubMed:10949023).</text>
</comment>
<comment type="domain">
    <molecule>Junctophilin-2</molecule>
    <text evidence="2">The MORN (membrane occupation and recognition nexus) repeats contribute to the plasma membrane binding, by interacting with phospholipids. Has affinity for phosphatidylserine, and phosphorylated phosphatidylinositols including PtdIns3P, PtdIns4P, PtdIns5P, PtdIns(3,5)P2 and PtdIns(3,4,5)P3.</text>
</comment>
<comment type="domain">
    <molecule>Junctophilin-2 N-terminal fragment</molecule>
    <text evidence="10">The bipartite nuclear localization signal (bNLS) and Ala-rich (alanine-rich; ARR) regions are involved in DNA-binding.</text>
</comment>
<comment type="PTM">
    <text evidence="8 10">Proteolytically cleaved by calpain in response to cardiac stress (PubMed:26063807). The major cleavage site takes place at the C-terminus and leads to the release of the Junctophilin-2 N-terminal fragment chain (JP2NT) (PubMed:26063807, PubMed:30409805).</text>
</comment>
<comment type="PTM">
    <text evidence="2">Phosphorylation on Ser-165, probably by PKC, affects RYR1-mediated calcium ion release, interaction with TRPC3, and skeletal muscle myotubule development.</text>
</comment>
<comment type="disruption phenotype">
    <text evidence="5 6 7">Null mice possess cardiomyocytes with deficiencies in the junctional membrane complexes and have abnormal Ca(2+) transients (PubMed:10949023, PubMed:19095005, PubMed:21339484). Mice die from cardiac arrest at 10.5 dpc (PubMed:10949023).</text>
</comment>
<comment type="similarity">
    <text evidence="13">Belongs to the junctophilin family.</text>
</comment>
<dbReference type="EMBL" id="AB024447">
    <property type="protein sequence ID" value="BAB12044.1"/>
    <property type="molecule type" value="mRNA"/>
</dbReference>
<dbReference type="EMBL" id="AB024448">
    <property type="protein sequence ID" value="BAB12045.1"/>
    <property type="molecule type" value="Genomic_DNA"/>
</dbReference>
<dbReference type="EMBL" id="AK157145">
    <property type="protein sequence ID" value="BAE33978.1"/>
    <property type="molecule type" value="mRNA"/>
</dbReference>
<dbReference type="EMBL" id="AL589876">
    <property type="status" value="NOT_ANNOTATED_CDS"/>
    <property type="molecule type" value="Genomic_DNA"/>
</dbReference>
<dbReference type="CCDS" id="CCDS17008.1"/>
<dbReference type="RefSeq" id="NP_001192005.1">
    <property type="nucleotide sequence ID" value="NM_001205076.1"/>
</dbReference>
<dbReference type="RefSeq" id="NP_067541.1">
    <property type="nucleotide sequence ID" value="NM_021566.2"/>
</dbReference>
<dbReference type="RefSeq" id="XP_006500035.1">
    <property type="nucleotide sequence ID" value="XM_006499972.3"/>
</dbReference>
<dbReference type="SMR" id="Q9ET78"/>
<dbReference type="BioGRID" id="208526">
    <property type="interactions" value="3"/>
</dbReference>
<dbReference type="FunCoup" id="Q9ET78">
    <property type="interactions" value="202"/>
</dbReference>
<dbReference type="IntAct" id="Q9ET78">
    <property type="interactions" value="4"/>
</dbReference>
<dbReference type="STRING" id="10090.ENSMUSP00000017961"/>
<dbReference type="GlyGen" id="Q9ET78">
    <property type="glycosylation" value="3 sites, 1 O-linked glycan (1 site)"/>
</dbReference>
<dbReference type="iPTMnet" id="Q9ET78"/>
<dbReference type="PhosphoSitePlus" id="Q9ET78"/>
<dbReference type="SwissPalm" id="Q9ET78"/>
<dbReference type="jPOST" id="Q9ET78"/>
<dbReference type="PaxDb" id="10090-ENSMUSP00000017961"/>
<dbReference type="PeptideAtlas" id="Q9ET78"/>
<dbReference type="ProteomicsDB" id="269034"/>
<dbReference type="Antibodypedia" id="27340">
    <property type="antibodies" value="341 antibodies from 32 providers"/>
</dbReference>
<dbReference type="DNASU" id="59091"/>
<dbReference type="Ensembl" id="ENSMUST00000017961.11">
    <property type="protein sequence ID" value="ENSMUSP00000017961.5"/>
    <property type="gene ID" value="ENSMUSG00000017817.12"/>
</dbReference>
<dbReference type="Ensembl" id="ENSMUST00000109425.3">
    <property type="protein sequence ID" value="ENSMUSP00000105052.3"/>
    <property type="gene ID" value="ENSMUSG00000017817.12"/>
</dbReference>
<dbReference type="GeneID" id="59091"/>
<dbReference type="KEGG" id="mmu:59091"/>
<dbReference type="UCSC" id="uc008nsp.2">
    <property type="organism name" value="mouse"/>
</dbReference>
<dbReference type="AGR" id="MGI:1891496"/>
<dbReference type="CTD" id="57158"/>
<dbReference type="MGI" id="MGI:1891496">
    <property type="gene designation" value="Jph2"/>
</dbReference>
<dbReference type="VEuPathDB" id="HostDB:ENSMUSG00000017817"/>
<dbReference type="eggNOG" id="KOG0231">
    <property type="taxonomic scope" value="Eukaryota"/>
</dbReference>
<dbReference type="GeneTree" id="ENSGT00940000159411"/>
<dbReference type="HOGENOM" id="CLU_008078_1_0_1"/>
<dbReference type="InParanoid" id="Q9ET78"/>
<dbReference type="OMA" id="ECEEGPN"/>
<dbReference type="OrthoDB" id="284854at2759"/>
<dbReference type="PhylomeDB" id="Q9ET78"/>
<dbReference type="TreeFam" id="TF317210"/>
<dbReference type="BioGRID-ORCS" id="59091">
    <property type="hits" value="4 hits in 77 CRISPR screens"/>
</dbReference>
<dbReference type="PRO" id="PR:Q9ET78"/>
<dbReference type="Proteomes" id="UP000000589">
    <property type="component" value="Chromosome 2"/>
</dbReference>
<dbReference type="RNAct" id="Q9ET78">
    <property type="molecule type" value="protein"/>
</dbReference>
<dbReference type="Bgee" id="ENSMUSG00000017817">
    <property type="expression patterns" value="Expressed in hindlimb stylopod muscle and 98 other cell types or tissues"/>
</dbReference>
<dbReference type="GO" id="GO:0030314">
    <property type="term" value="C:junctional membrane complex"/>
    <property type="evidence" value="ECO:0000315"/>
    <property type="project" value="UniProtKB"/>
</dbReference>
<dbReference type="GO" id="GO:0016020">
    <property type="term" value="C:membrane"/>
    <property type="evidence" value="ECO:0000314"/>
    <property type="project" value="MGI"/>
</dbReference>
<dbReference type="GO" id="GO:0005634">
    <property type="term" value="C:nucleus"/>
    <property type="evidence" value="ECO:0007669"/>
    <property type="project" value="UniProtKB-SubCell"/>
</dbReference>
<dbReference type="GO" id="GO:0005886">
    <property type="term" value="C:plasma membrane"/>
    <property type="evidence" value="ECO:0007669"/>
    <property type="project" value="UniProtKB-SubCell"/>
</dbReference>
<dbReference type="GO" id="GO:0016529">
    <property type="term" value="C:sarcoplasmic reticulum"/>
    <property type="evidence" value="ECO:0000314"/>
    <property type="project" value="MGI"/>
</dbReference>
<dbReference type="GO" id="GO:0033017">
    <property type="term" value="C:sarcoplasmic reticulum membrane"/>
    <property type="evidence" value="ECO:0007669"/>
    <property type="project" value="UniProtKB-SubCell"/>
</dbReference>
<dbReference type="GO" id="GO:0030018">
    <property type="term" value="C:Z disc"/>
    <property type="evidence" value="ECO:0000314"/>
    <property type="project" value="MGI"/>
</dbReference>
<dbReference type="GO" id="GO:0003677">
    <property type="term" value="F:DNA binding"/>
    <property type="evidence" value="ECO:0007669"/>
    <property type="project" value="UniProtKB-KW"/>
</dbReference>
<dbReference type="GO" id="GO:0070300">
    <property type="term" value="F:phosphatidic acid binding"/>
    <property type="evidence" value="ECO:0000250"/>
    <property type="project" value="UniProtKB"/>
</dbReference>
<dbReference type="GO" id="GO:0005547">
    <property type="term" value="F:phosphatidylinositol-3,4,5-trisphosphate binding"/>
    <property type="evidence" value="ECO:0000250"/>
    <property type="project" value="UniProtKB"/>
</dbReference>
<dbReference type="GO" id="GO:0080025">
    <property type="term" value="F:phosphatidylinositol-3,5-bisphosphate binding"/>
    <property type="evidence" value="ECO:0000250"/>
    <property type="project" value="UniProtKB"/>
</dbReference>
<dbReference type="GO" id="GO:0032266">
    <property type="term" value="F:phosphatidylinositol-3-phosphate binding"/>
    <property type="evidence" value="ECO:0000250"/>
    <property type="project" value="UniProtKB"/>
</dbReference>
<dbReference type="GO" id="GO:0005546">
    <property type="term" value="F:phosphatidylinositol-4,5-bisphosphate binding"/>
    <property type="evidence" value="ECO:0000250"/>
    <property type="project" value="UniProtKB"/>
</dbReference>
<dbReference type="GO" id="GO:0070273">
    <property type="term" value="F:phosphatidylinositol-4-phosphate binding"/>
    <property type="evidence" value="ECO:0000250"/>
    <property type="project" value="UniProtKB"/>
</dbReference>
<dbReference type="GO" id="GO:0010314">
    <property type="term" value="F:phosphatidylinositol-5-phosphate binding"/>
    <property type="evidence" value="ECO:0000250"/>
    <property type="project" value="UniProtKB"/>
</dbReference>
<dbReference type="GO" id="GO:0001786">
    <property type="term" value="F:phosphatidylserine binding"/>
    <property type="evidence" value="ECO:0000250"/>
    <property type="project" value="UniProtKB"/>
</dbReference>
<dbReference type="GO" id="GO:0055074">
    <property type="term" value="P:calcium ion homeostasis"/>
    <property type="evidence" value="ECO:0007669"/>
    <property type="project" value="Ensembl"/>
</dbReference>
<dbReference type="GO" id="GO:0007204">
    <property type="term" value="P:positive regulation of cytosolic calcium ion concentration"/>
    <property type="evidence" value="ECO:0000315"/>
    <property type="project" value="MGI"/>
</dbReference>
<dbReference type="GO" id="GO:0055024">
    <property type="term" value="P:regulation of cardiac muscle tissue development"/>
    <property type="evidence" value="ECO:0000315"/>
    <property type="project" value="UniProtKB"/>
</dbReference>
<dbReference type="FunFam" id="2.20.110.10:FF:000001">
    <property type="entry name" value="Junctophilin"/>
    <property type="match status" value="1"/>
</dbReference>
<dbReference type="FunFam" id="2.20.110.10:FF:000003">
    <property type="entry name" value="Junctophilin"/>
    <property type="match status" value="1"/>
</dbReference>
<dbReference type="Gene3D" id="2.20.110.10">
    <property type="entry name" value="Histone H3 K4-specific methyltransferase SET7/9 N-terminal domain"/>
    <property type="match status" value="2"/>
</dbReference>
<dbReference type="InterPro" id="IPR017191">
    <property type="entry name" value="Junctophilin"/>
</dbReference>
<dbReference type="InterPro" id="IPR003409">
    <property type="entry name" value="MORN"/>
</dbReference>
<dbReference type="PANTHER" id="PTHR23085">
    <property type="entry name" value="GH28348P"/>
    <property type="match status" value="1"/>
</dbReference>
<dbReference type="PANTHER" id="PTHR23085:SF26">
    <property type="entry name" value="JUNCTOPHILIN-2"/>
    <property type="match status" value="1"/>
</dbReference>
<dbReference type="Pfam" id="PF02493">
    <property type="entry name" value="MORN"/>
    <property type="match status" value="8"/>
</dbReference>
<dbReference type="PIRSF" id="PIRSF037387">
    <property type="entry name" value="Junctophilin"/>
    <property type="match status" value="1"/>
</dbReference>
<dbReference type="SMART" id="SM00698">
    <property type="entry name" value="MORN"/>
    <property type="match status" value="6"/>
</dbReference>
<dbReference type="SUPFAM" id="SSF82185">
    <property type="entry name" value="Histone H3 K4-specific methyltransferase SET7/9 N-terminal domain"/>
    <property type="match status" value="3"/>
</dbReference>
<evidence type="ECO:0000250" key="1">
    <source>
        <dbReference type="UniProtKB" id="Q2PS20"/>
    </source>
</evidence>
<evidence type="ECO:0000250" key="2">
    <source>
        <dbReference type="UniProtKB" id="Q9BR39"/>
    </source>
</evidence>
<evidence type="ECO:0000255" key="3"/>
<evidence type="ECO:0000256" key="4">
    <source>
        <dbReference type="SAM" id="MobiDB-lite"/>
    </source>
</evidence>
<evidence type="ECO:0000269" key="5">
    <source>
    </source>
</evidence>
<evidence type="ECO:0000269" key="6">
    <source>
    </source>
</evidence>
<evidence type="ECO:0000269" key="7">
    <source>
    </source>
</evidence>
<evidence type="ECO:0000269" key="8">
    <source>
    </source>
</evidence>
<evidence type="ECO:0000269" key="9">
    <source>
    </source>
</evidence>
<evidence type="ECO:0000269" key="10">
    <source>
    </source>
</evidence>
<evidence type="ECO:0000303" key="11">
    <source>
    </source>
</evidence>
<evidence type="ECO:0000303" key="12">
    <source>
    </source>
</evidence>
<evidence type="ECO:0000305" key="13"/>
<evidence type="ECO:0000305" key="14">
    <source>
    </source>
</evidence>
<evidence type="ECO:0000312" key="15">
    <source>
        <dbReference type="MGI" id="MGI:1891496"/>
    </source>
</evidence>
<evidence type="ECO:0007744" key="16">
    <source>
    </source>
</evidence>
<proteinExistence type="evidence at protein level"/>
<protein>
    <recommendedName>
        <fullName evidence="11">Junctophilin-2</fullName>
        <shortName evidence="11">JP-2</shortName>
    </recommendedName>
    <alternativeName>
        <fullName evidence="11">Junctophilin type 2</fullName>
    </alternativeName>
    <component>
        <recommendedName>
            <fullName evidence="12">Junctophilin-2 N-terminal fragment</fullName>
            <shortName evidence="12">JP2NT</shortName>
        </recommendedName>
    </component>
</protein>
<accession>Q9ET78</accession>
<accession>Q3U077</accession>
<accession>Q9ET79</accession>
<feature type="chain" id="PRO_0000159848" description="Junctophilin-2">
    <location>
        <begin position="1"/>
        <end position="696"/>
    </location>
</feature>
<feature type="chain" id="PRO_0000446376" description="Junctophilin-2 N-terminal fragment" evidence="14">
    <location>
        <begin position="1"/>
        <end position="565"/>
    </location>
</feature>
<feature type="topological domain" description="Cytoplasmic" evidence="3">
    <location>
        <begin position="1"/>
        <end position="674"/>
    </location>
</feature>
<feature type="transmembrane region" description="Helical; Anchor for type IV membrane protein" evidence="3">
    <location>
        <begin position="675"/>
        <end position="695"/>
    </location>
</feature>
<feature type="repeat" description="MORN 1" evidence="3">
    <location>
        <begin position="14"/>
        <end position="36"/>
    </location>
</feature>
<feature type="repeat" description="MORN 2" evidence="3">
    <location>
        <begin position="38"/>
        <end position="59"/>
    </location>
</feature>
<feature type="repeat" description="MORN 3" evidence="3">
    <location>
        <begin position="60"/>
        <end position="79"/>
    </location>
</feature>
<feature type="repeat" description="MORN 4" evidence="3">
    <location>
        <begin position="82"/>
        <end position="104"/>
    </location>
</feature>
<feature type="repeat" description="MORN 5" evidence="3">
    <location>
        <begin position="106"/>
        <end position="128"/>
    </location>
</feature>
<feature type="repeat" description="MORN 6" evidence="3">
    <location>
        <begin position="129"/>
        <end position="151"/>
    </location>
</feature>
<feature type="repeat" description="MORN 7" evidence="3">
    <location>
        <begin position="285"/>
        <end position="307"/>
    </location>
</feature>
<feature type="repeat" description="MORN 8" evidence="3">
    <location>
        <begin position="308"/>
        <end position="330"/>
    </location>
</feature>
<feature type="region of interest" description="Disordered" evidence="4">
    <location>
        <begin position="164"/>
        <end position="192"/>
    </location>
</feature>
<feature type="region of interest" description="Disordered" evidence="4">
    <location>
        <begin position="246"/>
        <end position="273"/>
    </location>
</feature>
<feature type="region of interest" description="Disordered" evidence="4">
    <location>
        <begin position="439"/>
        <end position="664"/>
    </location>
</feature>
<feature type="short sequence motif" description="Bipartite nuclear localization signal" evidence="10">
    <location>
        <begin position="345"/>
        <end position="359"/>
    </location>
</feature>
<feature type="short sequence motif" description="Nuclear localization signal" evidence="10">
    <location>
        <begin position="488"/>
        <end position="492"/>
    </location>
</feature>
<feature type="compositionally biased region" description="Basic and acidic residues" evidence="4">
    <location>
        <begin position="457"/>
        <end position="471"/>
    </location>
</feature>
<feature type="compositionally biased region" description="Pro residues" evidence="4">
    <location>
        <begin position="474"/>
        <end position="487"/>
    </location>
</feature>
<feature type="compositionally biased region" description="Acidic residues" evidence="4">
    <location>
        <begin position="573"/>
        <end position="585"/>
    </location>
</feature>
<feature type="compositionally biased region" description="Basic and acidic residues" evidence="4">
    <location>
        <begin position="631"/>
        <end position="644"/>
    </location>
</feature>
<feature type="site" description="Cleavage; by calpain" evidence="8">
    <location>
        <begin position="155"/>
        <end position="156"/>
    </location>
</feature>
<feature type="site" description="Cleavage; by calpain" evidence="8">
    <location>
        <begin position="201"/>
        <end position="202"/>
    </location>
</feature>
<feature type="site" description="Cleavage; by calpain" evidence="8">
    <location>
        <begin position="565"/>
        <end position="566"/>
    </location>
</feature>
<feature type="modified residue" description="Phosphoserine" evidence="1">
    <location>
        <position position="162"/>
    </location>
</feature>
<feature type="modified residue" description="Phosphoserine" evidence="2">
    <location>
        <position position="165"/>
    </location>
</feature>
<feature type="modified residue" description="Phosphoserine" evidence="1">
    <location>
        <position position="440"/>
    </location>
</feature>
<feature type="modified residue" description="Phosphoserine" evidence="1">
    <location>
        <position position="442"/>
    </location>
</feature>
<feature type="modified residue" description="Phosphoserine" evidence="16">
    <location>
        <position position="462"/>
    </location>
</feature>
<feature type="modified residue" description="Phosphothreonine" evidence="16">
    <location>
        <position position="470"/>
    </location>
</feature>
<feature type="modified residue" description="Phosphoserine" evidence="16">
    <location>
        <position position="479"/>
    </location>
</feature>
<feature type="modified residue" description="Phosphothreonine" evidence="16">
    <location>
        <position position="483"/>
    </location>
</feature>
<feature type="modified residue" description="Phosphoserine" evidence="1">
    <location>
        <position position="527"/>
    </location>
</feature>
<feature type="modified residue" description="Phosphoserine" evidence="1">
    <location>
        <position position="533"/>
    </location>
</feature>
<feature type="modified residue" description="Phosphoserine" evidence="16">
    <location>
        <position position="593"/>
    </location>
</feature>
<feature type="modified residue" description="Phosphoserine" evidence="16">
    <location>
        <position position="597"/>
    </location>
</feature>
<feature type="modified residue" description="Phosphoserine" evidence="16">
    <location>
        <position position="613"/>
    </location>
</feature>
<feature type="mutagenesis site" description="Abolishes cleavage by calpain at the N-terminus." evidence="8">
    <location>
        <begin position="153"/>
        <end position="158"/>
    </location>
</feature>
<feature type="mutagenesis site" description="Decreased transverse tubule regularity and aberrant calcium handling in septal cardiomyocytes." evidence="9">
    <original>A</original>
    <variation>S</variation>
    <location>
        <position position="399"/>
    </location>
</feature>
<feature type="mutagenesis site" description="Abolishes nuclear localization of the Junctophilin-2 N-terminal fragment chain." evidence="10">
    <location>
        <begin position="488"/>
        <end position="492"/>
    </location>
</feature>
<feature type="mutagenesis site" description="Abolishes cleavage by calpain at the C-terminus." evidence="8">
    <location>
        <begin position="563"/>
        <end position="568"/>
    </location>
</feature>
<keyword id="KW-1003">Cell membrane</keyword>
<keyword id="KW-0217">Developmental protein</keyword>
<keyword id="KW-0238">DNA-binding</keyword>
<keyword id="KW-0256">Endoplasmic reticulum</keyword>
<keyword id="KW-0472">Membrane</keyword>
<keyword id="KW-0539">Nucleus</keyword>
<keyword id="KW-0597">Phosphoprotein</keyword>
<keyword id="KW-1185">Reference proteome</keyword>
<keyword id="KW-0677">Repeat</keyword>
<keyword id="KW-0678">Repressor</keyword>
<keyword id="KW-0703">Sarcoplasmic reticulum</keyword>
<keyword id="KW-0804">Transcription</keyword>
<keyword id="KW-0805">Transcription regulation</keyword>
<keyword id="KW-0812">Transmembrane</keyword>
<keyword id="KW-1133">Transmembrane helix</keyword>
<reference key="1">
    <citation type="journal article" date="2000" name="Mol. Cell">
        <title>Junctophilins: a novel family of junctional membrane complex proteins.</title>
        <authorList>
            <person name="Takeshima H."/>
            <person name="Komazaki S."/>
            <person name="Nishi M."/>
            <person name="Iino M."/>
            <person name="Kangawa K."/>
        </authorList>
    </citation>
    <scope>NUCLEOTIDE SEQUENCE [GENOMIC DNA / MRNA]</scope>
    <scope>DISRUPTION PHENOTYPE</scope>
    <scope>SUBCELLULAR LOCATION</scope>
    <scope>TISSUE SPECIFICITY</scope>
    <scope>FUNCTION</scope>
    <source>
        <strain>129</strain>
        <strain>C57BL/6J</strain>
        <tissue>Heart</tissue>
    </source>
</reference>
<reference key="2">
    <citation type="journal article" date="2005" name="Science">
        <title>The transcriptional landscape of the mammalian genome.</title>
        <authorList>
            <person name="Carninci P."/>
            <person name="Kasukawa T."/>
            <person name="Katayama S."/>
            <person name="Gough J."/>
            <person name="Frith M.C."/>
            <person name="Maeda N."/>
            <person name="Oyama R."/>
            <person name="Ravasi T."/>
            <person name="Lenhard B."/>
            <person name="Wells C."/>
            <person name="Kodzius R."/>
            <person name="Shimokawa K."/>
            <person name="Bajic V.B."/>
            <person name="Brenner S.E."/>
            <person name="Batalov S."/>
            <person name="Forrest A.R."/>
            <person name="Zavolan M."/>
            <person name="Davis M.J."/>
            <person name="Wilming L.G."/>
            <person name="Aidinis V."/>
            <person name="Allen J.E."/>
            <person name="Ambesi-Impiombato A."/>
            <person name="Apweiler R."/>
            <person name="Aturaliya R.N."/>
            <person name="Bailey T.L."/>
            <person name="Bansal M."/>
            <person name="Baxter L."/>
            <person name="Beisel K.W."/>
            <person name="Bersano T."/>
            <person name="Bono H."/>
            <person name="Chalk A.M."/>
            <person name="Chiu K.P."/>
            <person name="Choudhary V."/>
            <person name="Christoffels A."/>
            <person name="Clutterbuck D.R."/>
            <person name="Crowe M.L."/>
            <person name="Dalla E."/>
            <person name="Dalrymple B.P."/>
            <person name="de Bono B."/>
            <person name="Della Gatta G."/>
            <person name="di Bernardo D."/>
            <person name="Down T."/>
            <person name="Engstrom P."/>
            <person name="Fagiolini M."/>
            <person name="Faulkner G."/>
            <person name="Fletcher C.F."/>
            <person name="Fukushima T."/>
            <person name="Furuno M."/>
            <person name="Futaki S."/>
            <person name="Gariboldi M."/>
            <person name="Georgii-Hemming P."/>
            <person name="Gingeras T.R."/>
            <person name="Gojobori T."/>
            <person name="Green R.E."/>
            <person name="Gustincich S."/>
            <person name="Harbers M."/>
            <person name="Hayashi Y."/>
            <person name="Hensch T.K."/>
            <person name="Hirokawa N."/>
            <person name="Hill D."/>
            <person name="Huminiecki L."/>
            <person name="Iacono M."/>
            <person name="Ikeo K."/>
            <person name="Iwama A."/>
            <person name="Ishikawa T."/>
            <person name="Jakt M."/>
            <person name="Kanapin A."/>
            <person name="Katoh M."/>
            <person name="Kawasawa Y."/>
            <person name="Kelso J."/>
            <person name="Kitamura H."/>
            <person name="Kitano H."/>
            <person name="Kollias G."/>
            <person name="Krishnan S.P."/>
            <person name="Kruger A."/>
            <person name="Kummerfeld S.K."/>
            <person name="Kurochkin I.V."/>
            <person name="Lareau L.F."/>
            <person name="Lazarevic D."/>
            <person name="Lipovich L."/>
            <person name="Liu J."/>
            <person name="Liuni S."/>
            <person name="McWilliam S."/>
            <person name="Madan Babu M."/>
            <person name="Madera M."/>
            <person name="Marchionni L."/>
            <person name="Matsuda H."/>
            <person name="Matsuzawa S."/>
            <person name="Miki H."/>
            <person name="Mignone F."/>
            <person name="Miyake S."/>
            <person name="Morris K."/>
            <person name="Mottagui-Tabar S."/>
            <person name="Mulder N."/>
            <person name="Nakano N."/>
            <person name="Nakauchi H."/>
            <person name="Ng P."/>
            <person name="Nilsson R."/>
            <person name="Nishiguchi S."/>
            <person name="Nishikawa S."/>
            <person name="Nori F."/>
            <person name="Ohara O."/>
            <person name="Okazaki Y."/>
            <person name="Orlando V."/>
            <person name="Pang K.C."/>
            <person name="Pavan W.J."/>
            <person name="Pavesi G."/>
            <person name="Pesole G."/>
            <person name="Petrovsky N."/>
            <person name="Piazza S."/>
            <person name="Reed J."/>
            <person name="Reid J.F."/>
            <person name="Ring B.Z."/>
            <person name="Ringwald M."/>
            <person name="Rost B."/>
            <person name="Ruan Y."/>
            <person name="Salzberg S.L."/>
            <person name="Sandelin A."/>
            <person name="Schneider C."/>
            <person name="Schoenbach C."/>
            <person name="Sekiguchi K."/>
            <person name="Semple C.A."/>
            <person name="Seno S."/>
            <person name="Sessa L."/>
            <person name="Sheng Y."/>
            <person name="Shibata Y."/>
            <person name="Shimada H."/>
            <person name="Shimada K."/>
            <person name="Silva D."/>
            <person name="Sinclair B."/>
            <person name="Sperling S."/>
            <person name="Stupka E."/>
            <person name="Sugiura K."/>
            <person name="Sultana R."/>
            <person name="Takenaka Y."/>
            <person name="Taki K."/>
            <person name="Tammoja K."/>
            <person name="Tan S.L."/>
            <person name="Tang S."/>
            <person name="Taylor M.S."/>
            <person name="Tegner J."/>
            <person name="Teichmann S.A."/>
            <person name="Ueda H.R."/>
            <person name="van Nimwegen E."/>
            <person name="Verardo R."/>
            <person name="Wei C.L."/>
            <person name="Yagi K."/>
            <person name="Yamanishi H."/>
            <person name="Zabarovsky E."/>
            <person name="Zhu S."/>
            <person name="Zimmer A."/>
            <person name="Hide W."/>
            <person name="Bult C."/>
            <person name="Grimmond S.M."/>
            <person name="Teasdale R.D."/>
            <person name="Liu E.T."/>
            <person name="Brusic V."/>
            <person name="Quackenbush J."/>
            <person name="Wahlestedt C."/>
            <person name="Mattick J.S."/>
            <person name="Hume D.A."/>
            <person name="Kai C."/>
            <person name="Sasaki D."/>
            <person name="Tomaru Y."/>
            <person name="Fukuda S."/>
            <person name="Kanamori-Katayama M."/>
            <person name="Suzuki M."/>
            <person name="Aoki J."/>
            <person name="Arakawa T."/>
            <person name="Iida J."/>
            <person name="Imamura K."/>
            <person name="Itoh M."/>
            <person name="Kato T."/>
            <person name="Kawaji H."/>
            <person name="Kawagashira N."/>
            <person name="Kawashima T."/>
            <person name="Kojima M."/>
            <person name="Kondo S."/>
            <person name="Konno H."/>
            <person name="Nakano K."/>
            <person name="Ninomiya N."/>
            <person name="Nishio T."/>
            <person name="Okada M."/>
            <person name="Plessy C."/>
            <person name="Shibata K."/>
            <person name="Shiraki T."/>
            <person name="Suzuki S."/>
            <person name="Tagami M."/>
            <person name="Waki K."/>
            <person name="Watahiki A."/>
            <person name="Okamura-Oho Y."/>
            <person name="Suzuki H."/>
            <person name="Kawai J."/>
            <person name="Hayashizaki Y."/>
        </authorList>
    </citation>
    <scope>NUCLEOTIDE SEQUENCE [LARGE SCALE MRNA]</scope>
    <source>
        <strain>NOD</strain>
        <tissue>Spleen</tissue>
    </source>
</reference>
<reference key="3">
    <citation type="journal article" date="2009" name="PLoS Biol.">
        <title>Lineage-specific biology revealed by a finished genome assembly of the mouse.</title>
        <authorList>
            <person name="Church D.M."/>
            <person name="Goodstadt L."/>
            <person name="Hillier L.W."/>
            <person name="Zody M.C."/>
            <person name="Goldstein S."/>
            <person name="She X."/>
            <person name="Bult C.J."/>
            <person name="Agarwala R."/>
            <person name="Cherry J.L."/>
            <person name="DiCuccio M."/>
            <person name="Hlavina W."/>
            <person name="Kapustin Y."/>
            <person name="Meric P."/>
            <person name="Maglott D."/>
            <person name="Birtle Z."/>
            <person name="Marques A.C."/>
            <person name="Graves T."/>
            <person name="Zhou S."/>
            <person name="Teague B."/>
            <person name="Potamousis K."/>
            <person name="Churas C."/>
            <person name="Place M."/>
            <person name="Herschleb J."/>
            <person name="Runnheim R."/>
            <person name="Forrest D."/>
            <person name="Amos-Landgraf J."/>
            <person name="Schwartz D.C."/>
            <person name="Cheng Z."/>
            <person name="Lindblad-Toh K."/>
            <person name="Eichler E.E."/>
            <person name="Ponting C.P."/>
        </authorList>
    </citation>
    <scope>NUCLEOTIDE SEQUENCE [LARGE SCALE GENOMIC DNA]</scope>
    <source>
        <strain>C57BL/6J</strain>
    </source>
</reference>
<reference key="4">
    <citation type="journal article" date="2009" name="Pharmacol. Ther.">
        <title>New molecular components supporting ryanodine receptor-mediated Ca(2+) release: roles of junctophilin and TRIC channel in embryonic cardiomyocytes.</title>
        <authorList>
            <person name="Yamazaki D."/>
            <person name="Yamazaki T."/>
            <person name="Takeshima H."/>
        </authorList>
    </citation>
    <scope>DISRUPTION PHENOTYPE</scope>
    <scope>FUNCTION</scope>
</reference>
<reference key="5">
    <citation type="journal article" date="2010" name="Cell">
        <title>A tissue-specific atlas of mouse protein phosphorylation and expression.</title>
        <authorList>
            <person name="Huttlin E.L."/>
            <person name="Jedrychowski M.P."/>
            <person name="Elias J.E."/>
            <person name="Goswami T."/>
            <person name="Rad R."/>
            <person name="Beausoleil S.A."/>
            <person name="Villen J."/>
            <person name="Haas W."/>
            <person name="Sowa M.E."/>
            <person name="Gygi S.P."/>
        </authorList>
    </citation>
    <scope>PHOSPHORYLATION [LARGE SCALE ANALYSIS] AT SER-462; THR-470; SER-479; THR-483; SER-593; SER-597 AND SER-613</scope>
    <scope>IDENTIFICATION BY MASS SPECTROMETRY [LARGE SCALE ANALYSIS]</scope>
    <source>
        <tissue>Brown adipose tissue</tissue>
        <tissue>Heart</tissue>
        <tissue>Kidney</tissue>
        <tissue>Lung</tissue>
        <tissue>Spleen</tissue>
        <tissue>Testis</tissue>
    </source>
</reference>
<reference key="6">
    <citation type="journal article" date="2011" name="Circulation">
        <title>Disrupted junctional membrane complexes and hyperactive ryanodine receptors after acute junctophilin knockdown in mice.</title>
        <authorList>
            <person name="van Oort R.J."/>
            <person name="Garbino A."/>
            <person name="Wang W."/>
            <person name="Dixit S.S."/>
            <person name="Landstrom A.P."/>
            <person name="Gaur N."/>
            <person name="De Almeida A.C."/>
            <person name="Skapura D.G."/>
            <person name="Rudy Y."/>
            <person name="Burns A.R."/>
            <person name="Ackerman M.J."/>
            <person name="Wehrens X.H."/>
        </authorList>
    </citation>
    <scope>DISRUPTION PHENOTYPE</scope>
    <scope>FUNCTION</scope>
</reference>
<reference key="7">
    <citation type="journal article" date="2014" name="Mol. Cell. Proteomics">
        <title>Immunoaffinity enrichment and mass spectrometry analysis of protein methylation.</title>
        <authorList>
            <person name="Guo A."/>
            <person name="Gu H."/>
            <person name="Zhou J."/>
            <person name="Mulhern D."/>
            <person name="Wang Y."/>
            <person name="Lee K.A."/>
            <person name="Yang V."/>
            <person name="Aguiar M."/>
            <person name="Kornhauser J."/>
            <person name="Jia X."/>
            <person name="Ren J."/>
            <person name="Beausoleil S.A."/>
            <person name="Silva J.C."/>
            <person name="Vemulapalli V."/>
            <person name="Bedford M.T."/>
            <person name="Comb M.J."/>
        </authorList>
    </citation>
    <scope>IDENTIFICATION BY MASS SPECTROMETRY [LARGE SCALE ANALYSIS]</scope>
    <source>
        <tissue>Brain</tissue>
    </source>
</reference>
<reference key="8">
    <citation type="journal article" date="2015" name="J. Biol. Chem.">
        <title>Molecular determinants of Calpain-dependent cleavage of Junctophilin-2 protein in cardiomyocytes.</title>
        <authorList>
            <person name="Guo A."/>
            <person name="Hall D."/>
            <person name="Zhang C."/>
            <person name="Peng T."/>
            <person name="Miller J.D."/>
            <person name="Kutschke W."/>
            <person name="Grueter C.E."/>
            <person name="Johnson F.L."/>
            <person name="Lin R.Z."/>
            <person name="Song L.S."/>
        </authorList>
    </citation>
    <scope>PROTEOLYTIC CLEAVAGE</scope>
    <scope>MUTAGENESIS OF 153-VAL--PRO-158 AND 563-ALA--PRO-568</scope>
</reference>
<reference key="9">
    <citation type="journal article" date="2017" name="JACC Basic Transl. Sci.">
        <title>Novel junctophilin-2 mutation A405S is associated with basal septal hypertrophy and diastolic dysfunction.</title>
        <authorList>
            <person name="Quick A.P."/>
            <person name="Landstrom A.P."/>
            <person name="Wang Q."/>
            <person name="Beavers D.L."/>
            <person name="Reynolds J.O."/>
            <person name="Barreto-Torres G."/>
            <person name="Tran V."/>
            <person name="Showell J."/>
            <person name="Philippen L.E."/>
            <person name="Morris S.A."/>
            <person name="Skapura D."/>
            <person name="Bos J.M."/>
            <person name="Pedersen S.E."/>
            <person name="Pautler R.G."/>
            <person name="Ackerman M.J."/>
            <person name="Wehrens X.H."/>
        </authorList>
    </citation>
    <scope>MUTAGENESIS OF ALA-399</scope>
</reference>
<reference key="10">
    <citation type="journal article" date="2018" name="Science">
        <title>E-C coupling structural protein junctophilin-2 encodes a stress-adaptive transcription regulator.</title>
        <authorList>
            <person name="Guo A."/>
            <person name="Wang Y."/>
            <person name="Chen B."/>
            <person name="Wang Y."/>
            <person name="Yuan J."/>
            <person name="Zhang L."/>
            <person name="Hall D."/>
            <person name="Wu J."/>
            <person name="Shi Y."/>
            <person name="Zhu Q."/>
            <person name="Chen C."/>
            <person name="Thiel W.H."/>
            <person name="Zhan X."/>
            <person name="Weiss R.M."/>
            <person name="Zhan F."/>
            <person name="Musselman C.A."/>
            <person name="Pufall M."/>
            <person name="Zhu W."/>
            <person name="Au K.F."/>
            <person name="Hong J."/>
            <person name="Anderson M.E."/>
            <person name="Grueter C.E."/>
            <person name="Song L.S."/>
        </authorList>
    </citation>
    <scope>FUNCTION (JUNCTOPHILIN-2 N-TERMINAL FRAGMENT)</scope>
    <scope>SUBCELLULAR LOCATION (JUNCTOPHILIN-2 N-TERMINAL FRAGMENT)</scope>
    <scope>INTERACTION WITH MEF2C (JUNCTOPHILIN-2 N-TERMINAL FRAGMENT)</scope>
    <scope>PROTEOLYTIC CLEAVAGE</scope>
    <scope>DOMAIN (JUNCTOPHILIN-2 N-TERMINAL FRAGMENT)</scope>
    <scope>MUTAGENESIS OF 488-LYS--PRO-492</scope>
</reference>
<sequence>MSGGRFDFDDGGAYCGGWEGGKAHGHGLCTGPKGQGEYSGSWNFGFEVAGVYTWPSGNTFEGYWSQGKRHGLGIETKGRWLYKGEWTHGFKGRYGIRQSTNSGAKYEGTWNNGLQDGYGTETYADGGTYQGQFTNGMRHGYGVRQSVPYGMAVVVRSPLRTSLSSLRSEHSNGTVAPDSPAADGPMLPSPPVPRGGFALTLLATAEAARPQGLFTRGTLLGRLRRSESRTSLGSQRSRLSFLKSELSSGASDAASTGSLAEGAEGPDDAAAPFDADIDATTTETYMGEWKNDKRSGFGVSERSSGLRYEGEWLDNLRHGYGRTTLPDGHREEGKYRHNVLVKGTKRRVLPLKSSKVRQKVEHGVEGAQRAAAIARQKAEIAASRTSHAKAKAEAAEQAALAANQESNIARTLAKELAPDFYQPGPEYQKRRLLQEILENSESLLEPPERGLGTGLPERPRESPQLHERETPQPEGGPPSPAGTPPQPKRPRPGASKDGLLSPGSWNGEPGGEGSRPATPSDGAGRRSPARPASEHMAIEALQPPPAPSQEPEVAMYRGYHSYAVRTGPPEPPPLEDEQEPEPEPEPEVRRSDSAPPSPVSATVPEEEPPAPRSPVPAKQATLEPKPIVPKAEPKAKARKTEARGLSKAGAKKKGRKEVAQAKEAEVEVEEVPNTVLICMVILLNIGLAILFVHLLT</sequence>
<gene>
    <name evidence="15" type="primary">Jph2</name>
    <name evidence="11" type="synonym">Jp2</name>
</gene>
<name>JPH2_MOUSE</name>
<organism>
    <name type="scientific">Mus musculus</name>
    <name type="common">Mouse</name>
    <dbReference type="NCBI Taxonomy" id="10090"/>
    <lineage>
        <taxon>Eukaryota</taxon>
        <taxon>Metazoa</taxon>
        <taxon>Chordata</taxon>
        <taxon>Craniata</taxon>
        <taxon>Vertebrata</taxon>
        <taxon>Euteleostomi</taxon>
        <taxon>Mammalia</taxon>
        <taxon>Eutheria</taxon>
        <taxon>Euarchontoglires</taxon>
        <taxon>Glires</taxon>
        <taxon>Rodentia</taxon>
        <taxon>Myomorpha</taxon>
        <taxon>Muroidea</taxon>
        <taxon>Muridae</taxon>
        <taxon>Murinae</taxon>
        <taxon>Mus</taxon>
        <taxon>Mus</taxon>
    </lineage>
</organism>